<proteinExistence type="evidence at protein level"/>
<reference evidence="3" key="1">
    <citation type="journal article" date="2016" name="Comp. Biochem. Physiol.">
        <title>Peptidomic analysis of the extensive array of host-defense peptides in skin secretions of the dodecaploid frog Xenopus ruwenzoriensis (Pipidae).</title>
        <authorList>
            <person name="Coquet L."/>
            <person name="Kolodziejek J."/>
            <person name="Jouenne T."/>
            <person name="Nowotny N."/>
            <person name="King J.D."/>
            <person name="Conlon J.M."/>
        </authorList>
    </citation>
    <scope>PROTEIN SEQUENCE</scope>
    <scope>SUBCELLULAR LOCATION</scope>
    <scope>MASS SPECTROMETRY</scope>
    <scope>AMIDATION AT VAL-17</scope>
    <source>
        <tissue evidence="2">Skin secretion</tissue>
    </source>
</reference>
<dbReference type="GO" id="GO:0005576">
    <property type="term" value="C:extracellular region"/>
    <property type="evidence" value="ECO:0007669"/>
    <property type="project" value="UniProtKB-SubCell"/>
</dbReference>
<dbReference type="GO" id="GO:0006952">
    <property type="term" value="P:defense response"/>
    <property type="evidence" value="ECO:0007669"/>
    <property type="project" value="UniProtKB-KW"/>
</dbReference>
<accession>C0HKN5</accession>
<keyword id="KW-0027">Amidation</keyword>
<keyword id="KW-0878">Amphibian defense peptide</keyword>
<keyword id="KW-0903">Direct protein sequencing</keyword>
<keyword id="KW-0964">Secreted</keyword>
<protein>
    <recommendedName>
        <fullName evidence="2">Caerulein precursor fragment-related peptide R3</fullName>
    </recommendedName>
    <alternativeName>
        <fullName evidence="2">CPF-RP-R3</fullName>
    </alternativeName>
</protein>
<sequence length="17" mass="1539">GIGSALAKAAKLVAGIV</sequence>
<organism evidence="2">
    <name type="scientific">Xenopus ruwenzoriensis</name>
    <name type="common">Uganda clawed frog</name>
    <dbReference type="NCBI Taxonomy" id="105430"/>
    <lineage>
        <taxon>Eukaryota</taxon>
        <taxon>Metazoa</taxon>
        <taxon>Chordata</taxon>
        <taxon>Craniata</taxon>
        <taxon>Vertebrata</taxon>
        <taxon>Euteleostomi</taxon>
        <taxon>Amphibia</taxon>
        <taxon>Batrachia</taxon>
        <taxon>Anura</taxon>
        <taxon>Pipoidea</taxon>
        <taxon>Pipidae</taxon>
        <taxon>Xenopodinae</taxon>
        <taxon>Xenopus</taxon>
        <taxon>Xenopus</taxon>
    </lineage>
</organism>
<comment type="subcellular location">
    <subcellularLocation>
        <location evidence="1">Secreted</location>
    </subcellularLocation>
</comment>
<comment type="tissue specificity">
    <text evidence="4">Expressed by the skin glands.</text>
</comment>
<comment type="mass spectrometry" mass="1538.0" method="MALDI" evidence="1"/>
<name>CRR3_XENRU</name>
<feature type="peptide" id="PRO_0000440922" description="Caerulein precursor fragment-related peptide R3" evidence="1">
    <location>
        <begin position="1"/>
        <end position="17"/>
    </location>
</feature>
<feature type="modified residue" description="Valine amide" evidence="1">
    <location>
        <position position="17"/>
    </location>
</feature>
<evidence type="ECO:0000269" key="1">
    <source>
    </source>
</evidence>
<evidence type="ECO:0000303" key="2">
    <source>
    </source>
</evidence>
<evidence type="ECO:0000305" key="3"/>
<evidence type="ECO:0000305" key="4">
    <source>
    </source>
</evidence>